<protein>
    <recommendedName>
        <fullName>EF-hand domain-containing protein D1</fullName>
    </recommendedName>
    <alternativeName>
        <fullName>EF-hand domain-containing protein 1</fullName>
    </alternativeName>
    <alternativeName>
        <fullName>Swiprosin-2</fullName>
    </alternativeName>
</protein>
<evidence type="ECO:0000250" key="1">
    <source>
        <dbReference type="UniProtKB" id="Q9BUP0"/>
    </source>
</evidence>
<evidence type="ECO:0000250" key="2">
    <source>
        <dbReference type="UniProtKB" id="Q9D4J1"/>
    </source>
</evidence>
<evidence type="ECO:0000255" key="3">
    <source>
        <dbReference type="PROSITE-ProRule" id="PRU00448"/>
    </source>
</evidence>
<evidence type="ECO:0000256" key="4">
    <source>
        <dbReference type="SAM" id="MobiDB-lite"/>
    </source>
</evidence>
<evidence type="ECO:0000305" key="5"/>
<keyword id="KW-0106">Calcium</keyword>
<keyword id="KW-0472">Membrane</keyword>
<keyword id="KW-0479">Metal-binding</keyword>
<keyword id="KW-0496">Mitochondrion</keyword>
<keyword id="KW-0999">Mitochondrion inner membrane</keyword>
<keyword id="KW-1185">Reference proteome</keyword>
<keyword id="KW-0677">Repeat</keyword>
<accession>Q17QM6</accession>
<sequence length="236" mass="26540">MASEELASKLQRRLQWEEGDSGLQPAPGAAPDPEPQPQPPAWAPTARADAELSAQLNRRLDINEGAARPRRCKVFHPYSEFPEFSRRLIKDLESMFKLYDAGRDGFIDLMELKLMMEKLGAPQTHLGLKSMIKEVDEDFDGKLSFREFLLIFHKAAAGELQEDSGLMALAKLSEIDVALEGVKGAKDFFEAKVQALSCASKFEAELKAEQDERKREEEKRKVRQAAFRELKAAFSA</sequence>
<gene>
    <name type="primary">EFHD1</name>
</gene>
<organism>
    <name type="scientific">Bos taurus</name>
    <name type="common">Bovine</name>
    <dbReference type="NCBI Taxonomy" id="9913"/>
    <lineage>
        <taxon>Eukaryota</taxon>
        <taxon>Metazoa</taxon>
        <taxon>Chordata</taxon>
        <taxon>Craniata</taxon>
        <taxon>Vertebrata</taxon>
        <taxon>Euteleostomi</taxon>
        <taxon>Mammalia</taxon>
        <taxon>Eutheria</taxon>
        <taxon>Laurasiatheria</taxon>
        <taxon>Artiodactyla</taxon>
        <taxon>Ruminantia</taxon>
        <taxon>Pecora</taxon>
        <taxon>Bovidae</taxon>
        <taxon>Bovinae</taxon>
        <taxon>Bos</taxon>
    </lineage>
</organism>
<comment type="function">
    <text evidence="1 2">Acts as a calcium sensor for mitochondrial flash (mitoflash) activation, an event characterized by stochastic bursts of superoxide production (By similarity). May play a role in neuronal differentiation (By similarity).</text>
</comment>
<comment type="subcellular location">
    <subcellularLocation>
        <location evidence="2">Mitochondrion inner membrane</location>
    </subcellularLocation>
</comment>
<feature type="chain" id="PRO_0000287581" description="EF-hand domain-containing protein D1">
    <location>
        <begin position="1"/>
        <end position="236"/>
    </location>
</feature>
<feature type="domain" description="EF-hand 1" evidence="3">
    <location>
        <begin position="87"/>
        <end position="122"/>
    </location>
</feature>
<feature type="domain" description="EF-hand 2" evidence="3">
    <location>
        <begin position="123"/>
        <end position="158"/>
    </location>
</feature>
<feature type="region of interest" description="Disordered" evidence="4">
    <location>
        <begin position="1"/>
        <end position="48"/>
    </location>
</feature>
<feature type="compositionally biased region" description="Pro residues" evidence="4">
    <location>
        <begin position="28"/>
        <end position="42"/>
    </location>
</feature>
<feature type="binding site" evidence="5">
    <location>
        <position position="100"/>
    </location>
    <ligand>
        <name>Ca(2+)</name>
        <dbReference type="ChEBI" id="CHEBI:29108"/>
        <label>1</label>
    </ligand>
</feature>
<feature type="binding site" evidence="5">
    <location>
        <position position="104"/>
    </location>
    <ligand>
        <name>Ca(2+)</name>
        <dbReference type="ChEBI" id="CHEBI:29108"/>
        <label>1</label>
    </ligand>
</feature>
<feature type="binding site" evidence="5">
    <location>
        <position position="111"/>
    </location>
    <ligand>
        <name>Ca(2+)</name>
        <dbReference type="ChEBI" id="CHEBI:29108"/>
        <label>1</label>
    </ligand>
</feature>
<feature type="binding site" evidence="5">
    <location>
        <position position="136"/>
    </location>
    <ligand>
        <name>Ca(2+)</name>
        <dbReference type="ChEBI" id="CHEBI:29108"/>
        <label>2</label>
    </ligand>
</feature>
<feature type="binding site" evidence="5">
    <location>
        <position position="138"/>
    </location>
    <ligand>
        <name>Ca(2+)</name>
        <dbReference type="ChEBI" id="CHEBI:29108"/>
        <label>2</label>
    </ligand>
</feature>
<feature type="binding site" evidence="5">
    <location>
        <position position="140"/>
    </location>
    <ligand>
        <name>Ca(2+)</name>
        <dbReference type="ChEBI" id="CHEBI:29108"/>
        <label>2</label>
    </ligand>
</feature>
<feature type="binding site" evidence="5">
    <location>
        <position position="142"/>
    </location>
    <ligand>
        <name>Ca(2+)</name>
        <dbReference type="ChEBI" id="CHEBI:29108"/>
        <label>2</label>
    </ligand>
</feature>
<feature type="binding site" evidence="5">
    <location>
        <position position="147"/>
    </location>
    <ligand>
        <name>Ca(2+)</name>
        <dbReference type="ChEBI" id="CHEBI:29108"/>
        <label>2</label>
    </ligand>
</feature>
<dbReference type="EMBL" id="BC118270">
    <property type="protein sequence ID" value="AAI18271.1"/>
    <property type="molecule type" value="mRNA"/>
</dbReference>
<dbReference type="RefSeq" id="NP_001069300.1">
    <property type="nucleotide sequence ID" value="NM_001075832.1"/>
</dbReference>
<dbReference type="SMR" id="Q17QM6"/>
<dbReference type="FunCoup" id="Q17QM6">
    <property type="interactions" value="195"/>
</dbReference>
<dbReference type="STRING" id="9913.ENSBTAP00000019429"/>
<dbReference type="PaxDb" id="9913-ENSBTAP00000019429"/>
<dbReference type="PeptideAtlas" id="Q17QM6"/>
<dbReference type="Ensembl" id="ENSBTAT00000019429.5">
    <property type="protein sequence ID" value="ENSBTAP00000019429.3"/>
    <property type="gene ID" value="ENSBTAG00000014596.5"/>
</dbReference>
<dbReference type="GeneID" id="522462"/>
<dbReference type="KEGG" id="bta:522462"/>
<dbReference type="CTD" id="80303"/>
<dbReference type="VEuPathDB" id="HostDB:ENSBTAG00000014596"/>
<dbReference type="VGNC" id="VGNC:28352">
    <property type="gene designation" value="EFHD1"/>
</dbReference>
<dbReference type="eggNOG" id="KOG0041">
    <property type="taxonomic scope" value="Eukaryota"/>
</dbReference>
<dbReference type="GeneTree" id="ENSGT00390000012058"/>
<dbReference type="HOGENOM" id="CLU_094429_0_0_1"/>
<dbReference type="InParanoid" id="Q17QM6"/>
<dbReference type="OMA" id="EVKHTYR"/>
<dbReference type="OrthoDB" id="6572480at2759"/>
<dbReference type="TreeFam" id="TF320736"/>
<dbReference type="Proteomes" id="UP000009136">
    <property type="component" value="Chromosome 3"/>
</dbReference>
<dbReference type="Bgee" id="ENSBTAG00000014596">
    <property type="expression patterns" value="Expressed in trachea and 102 other cell types or tissues"/>
</dbReference>
<dbReference type="GO" id="GO:0005743">
    <property type="term" value="C:mitochondrial inner membrane"/>
    <property type="evidence" value="ECO:0000318"/>
    <property type="project" value="GO_Central"/>
</dbReference>
<dbReference type="GO" id="GO:0005509">
    <property type="term" value="F:calcium ion binding"/>
    <property type="evidence" value="ECO:0000318"/>
    <property type="project" value="GO_Central"/>
</dbReference>
<dbReference type="GO" id="GO:0061891">
    <property type="term" value="F:calcium ion sensor activity"/>
    <property type="evidence" value="ECO:0000250"/>
    <property type="project" value="UniProtKB"/>
</dbReference>
<dbReference type="GO" id="GO:1900069">
    <property type="term" value="P:regulation of cellular hyperosmotic salinity response"/>
    <property type="evidence" value="ECO:0000250"/>
    <property type="project" value="UniProtKB"/>
</dbReference>
<dbReference type="CDD" id="cd00051">
    <property type="entry name" value="EFh"/>
    <property type="match status" value="1"/>
</dbReference>
<dbReference type="FunFam" id="1.10.238.10:FF:000112">
    <property type="entry name" value="EF-hand domain family, member D2"/>
    <property type="match status" value="1"/>
</dbReference>
<dbReference type="Gene3D" id="1.10.238.10">
    <property type="entry name" value="EF-hand"/>
    <property type="match status" value="1"/>
</dbReference>
<dbReference type="InterPro" id="IPR011992">
    <property type="entry name" value="EF-hand-dom_pair"/>
</dbReference>
<dbReference type="InterPro" id="IPR002048">
    <property type="entry name" value="EF_hand_dom"/>
</dbReference>
<dbReference type="InterPro" id="IPR040365">
    <property type="entry name" value="EFHD1/2"/>
</dbReference>
<dbReference type="PANTHER" id="PTHR13025">
    <property type="entry name" value="EF-HAND DOMAIN-CONTAINING PROTEIN D"/>
    <property type="match status" value="1"/>
</dbReference>
<dbReference type="PANTHER" id="PTHR13025:SF5">
    <property type="entry name" value="EF-HAND DOMAIN-CONTAINING PROTEIN D1"/>
    <property type="match status" value="1"/>
</dbReference>
<dbReference type="Pfam" id="PF13499">
    <property type="entry name" value="EF-hand_7"/>
    <property type="match status" value="1"/>
</dbReference>
<dbReference type="SMART" id="SM00054">
    <property type="entry name" value="EFh"/>
    <property type="match status" value="2"/>
</dbReference>
<dbReference type="SUPFAM" id="SSF47473">
    <property type="entry name" value="EF-hand"/>
    <property type="match status" value="1"/>
</dbReference>
<dbReference type="PROSITE" id="PS50222">
    <property type="entry name" value="EF_HAND_2"/>
    <property type="match status" value="2"/>
</dbReference>
<proteinExistence type="evidence at transcript level"/>
<name>EFHD1_BOVIN</name>
<reference key="1">
    <citation type="submission" date="2006-06" db="EMBL/GenBank/DDBJ databases">
        <authorList>
            <consortium name="NIH - Mammalian Gene Collection (MGC) project"/>
        </authorList>
    </citation>
    <scope>NUCLEOTIDE SEQUENCE [LARGE SCALE MRNA]</scope>
    <source>
        <strain>Hereford</strain>
        <tissue>Basal ganglia</tissue>
    </source>
</reference>